<keyword id="KW-0315">Glutamine amidotransferase</keyword>
<keyword id="KW-0378">Hydrolase</keyword>
<keyword id="KW-0456">Lyase</keyword>
<keyword id="KW-0663">Pyridoxal phosphate</keyword>
<evidence type="ECO:0000255" key="1">
    <source>
        <dbReference type="HAMAP-Rule" id="MF_01615"/>
    </source>
</evidence>
<comment type="function">
    <text evidence="1">Catalyzes the hydrolysis of glutamine to glutamate and ammonia as part of the biosynthesis of pyridoxal 5'-phosphate. The resulting ammonia molecule is channeled to the active site of PdxS.</text>
</comment>
<comment type="catalytic activity">
    <reaction evidence="1">
        <text>aldehydo-D-ribose 5-phosphate + D-glyceraldehyde 3-phosphate + L-glutamine = pyridoxal 5'-phosphate + L-glutamate + phosphate + 3 H2O + H(+)</text>
        <dbReference type="Rhea" id="RHEA:31507"/>
        <dbReference type="ChEBI" id="CHEBI:15377"/>
        <dbReference type="ChEBI" id="CHEBI:15378"/>
        <dbReference type="ChEBI" id="CHEBI:29985"/>
        <dbReference type="ChEBI" id="CHEBI:43474"/>
        <dbReference type="ChEBI" id="CHEBI:58273"/>
        <dbReference type="ChEBI" id="CHEBI:58359"/>
        <dbReference type="ChEBI" id="CHEBI:59776"/>
        <dbReference type="ChEBI" id="CHEBI:597326"/>
        <dbReference type="EC" id="4.3.3.6"/>
    </reaction>
</comment>
<comment type="catalytic activity">
    <reaction evidence="1">
        <text>L-glutamine + H2O = L-glutamate + NH4(+)</text>
        <dbReference type="Rhea" id="RHEA:15889"/>
        <dbReference type="ChEBI" id="CHEBI:15377"/>
        <dbReference type="ChEBI" id="CHEBI:28938"/>
        <dbReference type="ChEBI" id="CHEBI:29985"/>
        <dbReference type="ChEBI" id="CHEBI:58359"/>
        <dbReference type="EC" id="3.5.1.2"/>
    </reaction>
</comment>
<comment type="pathway">
    <text evidence="1">Cofactor biosynthesis; pyridoxal 5'-phosphate biosynthesis.</text>
</comment>
<comment type="subunit">
    <text evidence="1">In the presence of PdxS, forms a dodecamer of heterodimers. Only shows activity in the heterodimer.</text>
</comment>
<comment type="similarity">
    <text evidence="1">Belongs to the glutaminase PdxT/SNO family.</text>
</comment>
<protein>
    <recommendedName>
        <fullName evidence="1">Pyridoxal 5'-phosphate synthase subunit PdxT</fullName>
        <ecNumber evidence="1">4.3.3.6</ecNumber>
    </recommendedName>
    <alternativeName>
        <fullName evidence="1">Pdx2</fullName>
    </alternativeName>
    <alternativeName>
        <fullName evidence="1">Pyridoxal 5'-phosphate synthase glutaminase subunit</fullName>
        <ecNumber evidence="1">3.5.1.2</ecNumber>
    </alternativeName>
</protein>
<sequence>MLTIGVLGLQGAVREHIQSIEACGAEGKIIKRAEELVSVDGLIIPGGESTTMRRLMDTYQFIEPIKAFAAKGKPIFGTCAGLIMLAKHIEDRDNAHLGLLNVSVARNSFGRQVDSFEADLEVKGLDAPFTGVFIRAPHIISADESVEVMAEYDGRIVMAKENNILGCSFHPELTDDHRLTQLFVEMVKTYKTKLAV</sequence>
<reference key="1">
    <citation type="journal article" date="2007" name="PLoS ONE">
        <title>Paradoxical DNA repair and peroxide resistance gene conservation in Bacillus pumilus SAFR-032.</title>
        <authorList>
            <person name="Gioia J."/>
            <person name="Yerrapragada S."/>
            <person name="Qin X."/>
            <person name="Jiang H."/>
            <person name="Igboeli O.C."/>
            <person name="Muzny D."/>
            <person name="Dugan-Rocha S."/>
            <person name="Ding Y."/>
            <person name="Hawes A."/>
            <person name="Liu W."/>
            <person name="Perez L."/>
            <person name="Kovar C."/>
            <person name="Dinh H."/>
            <person name="Lee S."/>
            <person name="Nazareth L."/>
            <person name="Blyth P."/>
            <person name="Holder M."/>
            <person name="Buhay C."/>
            <person name="Tirumalai M.R."/>
            <person name="Liu Y."/>
            <person name="Dasgupta I."/>
            <person name="Bokhetache L."/>
            <person name="Fujita M."/>
            <person name="Karouia F."/>
            <person name="Eswara Moorthy P."/>
            <person name="Siefert J."/>
            <person name="Uzman A."/>
            <person name="Buzumbo P."/>
            <person name="Verma A."/>
            <person name="Zwiya H."/>
            <person name="McWilliams B.D."/>
            <person name="Olowu A."/>
            <person name="Clinkenbeard K.D."/>
            <person name="Newcombe D."/>
            <person name="Golebiewski L."/>
            <person name="Petrosino J.F."/>
            <person name="Nicholson W.L."/>
            <person name="Fox G.E."/>
            <person name="Venkateswaran K."/>
            <person name="Highlander S.K."/>
            <person name="Weinstock G.M."/>
        </authorList>
    </citation>
    <scope>NUCLEOTIDE SEQUENCE [LARGE SCALE GENOMIC DNA]</scope>
    <source>
        <strain>SAFR-032</strain>
    </source>
</reference>
<organism>
    <name type="scientific">Bacillus pumilus (strain SAFR-032)</name>
    <dbReference type="NCBI Taxonomy" id="315750"/>
    <lineage>
        <taxon>Bacteria</taxon>
        <taxon>Bacillati</taxon>
        <taxon>Bacillota</taxon>
        <taxon>Bacilli</taxon>
        <taxon>Bacillales</taxon>
        <taxon>Bacillaceae</taxon>
        <taxon>Bacillus</taxon>
    </lineage>
</organism>
<dbReference type="EC" id="4.3.3.6" evidence="1"/>
<dbReference type="EC" id="3.5.1.2" evidence="1"/>
<dbReference type="EMBL" id="CP000813">
    <property type="protein sequence ID" value="ABV61203.1"/>
    <property type="molecule type" value="Genomic_DNA"/>
</dbReference>
<dbReference type="RefSeq" id="WP_012009059.1">
    <property type="nucleotide sequence ID" value="NC_009848.4"/>
</dbReference>
<dbReference type="SMR" id="A8FAD6"/>
<dbReference type="STRING" id="315750.BPUM_0508"/>
<dbReference type="MEROPS" id="C26.A32"/>
<dbReference type="GeneID" id="5619225"/>
<dbReference type="KEGG" id="bpu:BPUM_0508"/>
<dbReference type="eggNOG" id="COG0311">
    <property type="taxonomic scope" value="Bacteria"/>
</dbReference>
<dbReference type="HOGENOM" id="CLU_069674_2_0_9"/>
<dbReference type="OrthoDB" id="9810320at2"/>
<dbReference type="UniPathway" id="UPA00245"/>
<dbReference type="Proteomes" id="UP000001355">
    <property type="component" value="Chromosome"/>
</dbReference>
<dbReference type="GO" id="GO:0005829">
    <property type="term" value="C:cytosol"/>
    <property type="evidence" value="ECO:0007669"/>
    <property type="project" value="TreeGrafter"/>
</dbReference>
<dbReference type="GO" id="GO:1903600">
    <property type="term" value="C:glutaminase complex"/>
    <property type="evidence" value="ECO:0007669"/>
    <property type="project" value="TreeGrafter"/>
</dbReference>
<dbReference type="GO" id="GO:0004359">
    <property type="term" value="F:glutaminase activity"/>
    <property type="evidence" value="ECO:0007669"/>
    <property type="project" value="UniProtKB-UniRule"/>
</dbReference>
<dbReference type="GO" id="GO:0036381">
    <property type="term" value="F:pyridoxal 5'-phosphate synthase (glutamine hydrolysing) activity"/>
    <property type="evidence" value="ECO:0007669"/>
    <property type="project" value="UniProtKB-UniRule"/>
</dbReference>
<dbReference type="GO" id="GO:0006543">
    <property type="term" value="P:glutamine catabolic process"/>
    <property type="evidence" value="ECO:0007669"/>
    <property type="project" value="UniProtKB-UniRule"/>
</dbReference>
<dbReference type="GO" id="GO:0042823">
    <property type="term" value="P:pyridoxal phosphate biosynthetic process"/>
    <property type="evidence" value="ECO:0007669"/>
    <property type="project" value="UniProtKB-UniRule"/>
</dbReference>
<dbReference type="GO" id="GO:0008614">
    <property type="term" value="P:pyridoxine metabolic process"/>
    <property type="evidence" value="ECO:0007669"/>
    <property type="project" value="TreeGrafter"/>
</dbReference>
<dbReference type="CDD" id="cd01749">
    <property type="entry name" value="GATase1_PB"/>
    <property type="match status" value="1"/>
</dbReference>
<dbReference type="FunFam" id="3.40.50.880:FF:000010">
    <property type="entry name" value="uncharacterized protein LOC100176842 isoform X2"/>
    <property type="match status" value="1"/>
</dbReference>
<dbReference type="Gene3D" id="3.40.50.880">
    <property type="match status" value="1"/>
</dbReference>
<dbReference type="HAMAP" id="MF_01615">
    <property type="entry name" value="PdxT"/>
    <property type="match status" value="1"/>
</dbReference>
<dbReference type="InterPro" id="IPR029062">
    <property type="entry name" value="Class_I_gatase-like"/>
</dbReference>
<dbReference type="InterPro" id="IPR002161">
    <property type="entry name" value="PdxT/SNO"/>
</dbReference>
<dbReference type="InterPro" id="IPR021196">
    <property type="entry name" value="PdxT/SNO_CS"/>
</dbReference>
<dbReference type="NCBIfam" id="TIGR03800">
    <property type="entry name" value="PLP_synth_Pdx2"/>
    <property type="match status" value="1"/>
</dbReference>
<dbReference type="PANTHER" id="PTHR31559">
    <property type="entry name" value="PYRIDOXAL 5'-PHOSPHATE SYNTHASE SUBUNIT SNO"/>
    <property type="match status" value="1"/>
</dbReference>
<dbReference type="PANTHER" id="PTHR31559:SF0">
    <property type="entry name" value="PYRIDOXAL 5'-PHOSPHATE SYNTHASE SUBUNIT SNO1-RELATED"/>
    <property type="match status" value="1"/>
</dbReference>
<dbReference type="Pfam" id="PF01174">
    <property type="entry name" value="SNO"/>
    <property type="match status" value="1"/>
</dbReference>
<dbReference type="PIRSF" id="PIRSF005639">
    <property type="entry name" value="Glut_amidoT_SNO"/>
    <property type="match status" value="1"/>
</dbReference>
<dbReference type="SUPFAM" id="SSF52317">
    <property type="entry name" value="Class I glutamine amidotransferase-like"/>
    <property type="match status" value="1"/>
</dbReference>
<dbReference type="PROSITE" id="PS01236">
    <property type="entry name" value="PDXT_SNO_1"/>
    <property type="match status" value="1"/>
</dbReference>
<dbReference type="PROSITE" id="PS51130">
    <property type="entry name" value="PDXT_SNO_2"/>
    <property type="match status" value="1"/>
</dbReference>
<name>PDXT_BACP2</name>
<feature type="chain" id="PRO_1000088044" description="Pyridoxal 5'-phosphate synthase subunit PdxT">
    <location>
        <begin position="1"/>
        <end position="196"/>
    </location>
</feature>
<feature type="active site" description="Nucleophile" evidence="1">
    <location>
        <position position="79"/>
    </location>
</feature>
<feature type="active site" description="Charge relay system" evidence="1">
    <location>
        <position position="170"/>
    </location>
</feature>
<feature type="active site" description="Charge relay system" evidence="1">
    <location>
        <position position="172"/>
    </location>
</feature>
<feature type="binding site" evidence="1">
    <location>
        <begin position="47"/>
        <end position="49"/>
    </location>
    <ligand>
        <name>L-glutamine</name>
        <dbReference type="ChEBI" id="CHEBI:58359"/>
    </ligand>
</feature>
<feature type="binding site" evidence="1">
    <location>
        <position position="106"/>
    </location>
    <ligand>
        <name>L-glutamine</name>
        <dbReference type="ChEBI" id="CHEBI:58359"/>
    </ligand>
</feature>
<feature type="binding site" evidence="1">
    <location>
        <begin position="134"/>
        <end position="135"/>
    </location>
    <ligand>
        <name>L-glutamine</name>
        <dbReference type="ChEBI" id="CHEBI:58359"/>
    </ligand>
</feature>
<gene>
    <name evidence="1" type="primary">pdxT</name>
    <name type="ordered locus">BPUM_0508</name>
</gene>
<proteinExistence type="inferred from homology"/>
<accession>A8FAD6</accession>